<comment type="function">
    <text evidence="1">Provides the rickettsial cell with host ATP in exchange for rickettsial ADP. This is an obligate exchange system. This energy acquiring activity is an important component of rickettsial parasitism (By similarity).</text>
</comment>
<comment type="subcellular location">
    <subcellularLocation>
        <location>Cell membrane</location>
        <topology>Multi-pass membrane protein</topology>
    </subcellularLocation>
</comment>
<comment type="similarity">
    <text evidence="3">Belongs to the ADP/ATP translocase tlc family.</text>
</comment>
<proteinExistence type="inferred from homology"/>
<keyword id="KW-0067">ATP-binding</keyword>
<keyword id="KW-1003">Cell membrane</keyword>
<keyword id="KW-0472">Membrane</keyword>
<keyword id="KW-0547">Nucleotide-binding</keyword>
<keyword id="KW-1185">Reference proteome</keyword>
<keyword id="KW-0812">Transmembrane</keyword>
<keyword id="KW-1133">Transmembrane helix</keyword>
<keyword id="KW-0813">Transport</keyword>
<evidence type="ECO:0000250" key="1"/>
<evidence type="ECO:0000255" key="2"/>
<evidence type="ECO:0000305" key="3"/>
<sequence length="512" mass="58208">MTINASNIENSFSKINSHFSKLTDYIWPIKRHEISKFLFITLLMFCILFIQNLIRALKDSIVTTMIGAETISFLKFWGVMPSAFLITVIYVKLVNRMKAENIFYLIISIFLTFFALFAYVIFPNHEMLHLRPVTVHNLTASLPNLKWFILLLSKWSFSLFYIIAELWPNVVFALLFWQFVNNITTVEESKRFYPLFGLLSQTGIYLAGHFLENLSNINYYVTNKFALQSSFHTLSIQIILTIVLILGIVSIKTFWLLNHKVLDKKHMALLRFKTKNKSITIAKSFQMILSSRHIRLIATLLICYGIAINLVEGPWKAAATKIYKTPTEYAAFIGSYLSYTGVFTIFFVLLGSNIVRRMGWFTSAVITPSIVFITGILFFAVNNFEGFAGLIIANFILTDPALVAITIGAIQNVLSKSSKYTLFDSTKEMAYVPLEPEIKISGKAAADVIGTKLGKSGSAFLQSLIFIILPSASYQSISICLMIIFILTCVTWIWATKELNKEYKNSIKFSQK</sequence>
<reference key="1">
    <citation type="journal article" date="1998" name="Nature">
        <title>The genome sequence of Rickettsia prowazekii and the origin of mitochondria.</title>
        <authorList>
            <person name="Andersson S.G.E."/>
            <person name="Zomorodipour A."/>
            <person name="Andersson J.O."/>
            <person name="Sicheritz-Ponten T."/>
            <person name="Alsmark U.C.M."/>
            <person name="Podowski R.M."/>
            <person name="Naeslund A.K."/>
            <person name="Eriksson A.-S."/>
            <person name="Winkler H.H."/>
            <person name="Kurland C.G."/>
        </authorList>
    </citation>
    <scope>NUCLEOTIDE SEQUENCE [LARGE SCALE GENOMIC DNA]</scope>
    <source>
        <strain>Madrid E</strain>
    </source>
</reference>
<name>TLCD_RICPR</name>
<protein>
    <recommendedName>
        <fullName>ADP,ATP carrier protein 4</fullName>
    </recommendedName>
    <alternativeName>
        <fullName>ADP/ATP translocase 4</fullName>
    </alternativeName>
</protein>
<accession>Q9ZD47</accession>
<feature type="chain" id="PRO_0000102583" description="ADP,ATP carrier protein 4">
    <location>
        <begin position="1"/>
        <end position="512"/>
    </location>
</feature>
<feature type="transmembrane region" description="Helical" evidence="2">
    <location>
        <begin position="34"/>
        <end position="54"/>
    </location>
</feature>
<feature type="transmembrane region" description="Helical" evidence="2">
    <location>
        <begin position="71"/>
        <end position="91"/>
    </location>
</feature>
<feature type="transmembrane region" description="Helical" evidence="2">
    <location>
        <begin position="102"/>
        <end position="122"/>
    </location>
</feature>
<feature type="transmembrane region" description="Helical" evidence="2">
    <location>
        <begin position="157"/>
        <end position="177"/>
    </location>
</feature>
<feature type="transmembrane region" description="Helical" evidence="2">
    <location>
        <begin position="192"/>
        <end position="212"/>
    </location>
</feature>
<feature type="transmembrane region" description="Helical" evidence="2">
    <location>
        <begin position="231"/>
        <end position="251"/>
    </location>
</feature>
<feature type="transmembrane region" description="Helical" evidence="2">
    <location>
        <begin position="296"/>
        <end position="316"/>
    </location>
</feature>
<feature type="transmembrane region" description="Helical" evidence="2">
    <location>
        <begin position="330"/>
        <end position="350"/>
    </location>
</feature>
<feature type="transmembrane region" description="Helical" evidence="2">
    <location>
        <begin position="361"/>
        <end position="381"/>
    </location>
</feature>
<feature type="transmembrane region" description="Helical" evidence="2">
    <location>
        <begin position="390"/>
        <end position="410"/>
    </location>
</feature>
<feature type="transmembrane region" description="Helical" evidence="2">
    <location>
        <begin position="476"/>
        <end position="496"/>
    </location>
</feature>
<organism>
    <name type="scientific">Rickettsia prowazekii (strain Madrid E)</name>
    <dbReference type="NCBI Taxonomy" id="272947"/>
    <lineage>
        <taxon>Bacteria</taxon>
        <taxon>Pseudomonadati</taxon>
        <taxon>Pseudomonadota</taxon>
        <taxon>Alphaproteobacteria</taxon>
        <taxon>Rickettsiales</taxon>
        <taxon>Rickettsiaceae</taxon>
        <taxon>Rickettsieae</taxon>
        <taxon>Rickettsia</taxon>
        <taxon>typhus group</taxon>
    </lineage>
</organism>
<gene>
    <name type="primary">tlcD</name>
    <name type="synonym">tlc4</name>
    <name type="ordered locus">RP500</name>
</gene>
<dbReference type="EMBL" id="AJ235272">
    <property type="protein sequence ID" value="CAA14952.1"/>
    <property type="molecule type" value="Genomic_DNA"/>
</dbReference>
<dbReference type="PIR" id="F71653">
    <property type="entry name" value="F71653"/>
</dbReference>
<dbReference type="RefSeq" id="NP_220876.1">
    <property type="nucleotide sequence ID" value="NC_000963.1"/>
</dbReference>
<dbReference type="RefSeq" id="WP_004597746.1">
    <property type="nucleotide sequence ID" value="NC_000963.1"/>
</dbReference>
<dbReference type="STRING" id="272947.gene:17555580"/>
<dbReference type="TCDB" id="2.A.12.1.4">
    <property type="family name" value="the atp:adp antiporter (aaa) family"/>
</dbReference>
<dbReference type="EnsemblBacteria" id="CAA14952">
    <property type="protein sequence ID" value="CAA14952"/>
    <property type="gene ID" value="CAA14952"/>
</dbReference>
<dbReference type="GeneID" id="57569623"/>
<dbReference type="KEGG" id="rpr:RP500"/>
<dbReference type="PATRIC" id="fig|272947.5.peg.509"/>
<dbReference type="eggNOG" id="COG3202">
    <property type="taxonomic scope" value="Bacteria"/>
</dbReference>
<dbReference type="HOGENOM" id="CLU_023964_0_1_5"/>
<dbReference type="OrthoDB" id="19786at2"/>
<dbReference type="Proteomes" id="UP000002480">
    <property type="component" value="Chromosome"/>
</dbReference>
<dbReference type="GO" id="GO:0005886">
    <property type="term" value="C:plasma membrane"/>
    <property type="evidence" value="ECO:0007669"/>
    <property type="project" value="UniProtKB-SubCell"/>
</dbReference>
<dbReference type="GO" id="GO:0005524">
    <property type="term" value="F:ATP binding"/>
    <property type="evidence" value="ECO:0007669"/>
    <property type="project" value="UniProtKB-KW"/>
</dbReference>
<dbReference type="GO" id="GO:0005471">
    <property type="term" value="F:ATP:ADP antiporter activity"/>
    <property type="evidence" value="ECO:0007669"/>
    <property type="project" value="InterPro"/>
</dbReference>
<dbReference type="GO" id="GO:0015931">
    <property type="term" value="P:nucleobase-containing compound transport"/>
    <property type="evidence" value="ECO:0000314"/>
    <property type="project" value="CACAO"/>
</dbReference>
<dbReference type="InterPro" id="IPR004667">
    <property type="entry name" value="ADP_ATP_car_bac_type"/>
</dbReference>
<dbReference type="NCBIfam" id="TIGR00769">
    <property type="entry name" value="AAA"/>
    <property type="match status" value="1"/>
</dbReference>
<dbReference type="PANTHER" id="PTHR31187">
    <property type="match status" value="1"/>
</dbReference>
<dbReference type="PANTHER" id="PTHR31187:SF1">
    <property type="entry name" value="ADP,ATP CARRIER PROTEIN 1"/>
    <property type="match status" value="1"/>
</dbReference>
<dbReference type="Pfam" id="PF03219">
    <property type="entry name" value="TLC"/>
    <property type="match status" value="1"/>
</dbReference>